<name>RL29_BURM9</name>
<reference key="1">
    <citation type="journal article" date="2010" name="Genome Biol. Evol.">
        <title>Continuing evolution of Burkholderia mallei through genome reduction and large-scale rearrangements.</title>
        <authorList>
            <person name="Losada L."/>
            <person name="Ronning C.M."/>
            <person name="DeShazer D."/>
            <person name="Woods D."/>
            <person name="Fedorova N."/>
            <person name="Kim H.S."/>
            <person name="Shabalina S.A."/>
            <person name="Pearson T.R."/>
            <person name="Brinkac L."/>
            <person name="Tan P."/>
            <person name="Nandi T."/>
            <person name="Crabtree J."/>
            <person name="Badger J."/>
            <person name="Beckstrom-Sternberg S."/>
            <person name="Saqib M."/>
            <person name="Schutzer S.E."/>
            <person name="Keim P."/>
            <person name="Nierman W.C."/>
        </authorList>
    </citation>
    <scope>NUCLEOTIDE SEQUENCE [LARGE SCALE GENOMIC DNA]</scope>
    <source>
        <strain>NCTC 10229</strain>
    </source>
</reference>
<protein>
    <recommendedName>
        <fullName evidence="1">Large ribosomal subunit protein uL29</fullName>
    </recommendedName>
    <alternativeName>
        <fullName evidence="2">50S ribosomal protein L29</fullName>
    </alternativeName>
</protein>
<organism>
    <name type="scientific">Burkholderia mallei (strain NCTC 10229)</name>
    <dbReference type="NCBI Taxonomy" id="412022"/>
    <lineage>
        <taxon>Bacteria</taxon>
        <taxon>Pseudomonadati</taxon>
        <taxon>Pseudomonadota</taxon>
        <taxon>Betaproteobacteria</taxon>
        <taxon>Burkholderiales</taxon>
        <taxon>Burkholderiaceae</taxon>
        <taxon>Burkholderia</taxon>
        <taxon>pseudomallei group</taxon>
    </lineage>
</organism>
<keyword id="KW-0687">Ribonucleoprotein</keyword>
<keyword id="KW-0689">Ribosomal protein</keyword>
<proteinExistence type="inferred from homology"/>
<sequence>MKASELLQKDQAALNKELSDLLKAQFGLRMQLATQQLTNTSQLKKVRRDIARVRTVLTQKANQK</sequence>
<gene>
    <name evidence="1" type="primary">rpmC</name>
    <name type="ordered locus">BMA10229_A1932</name>
</gene>
<comment type="similarity">
    <text evidence="1">Belongs to the universal ribosomal protein uL29 family.</text>
</comment>
<accession>A2S7I4</accession>
<dbReference type="EMBL" id="CP000546">
    <property type="protein sequence ID" value="ABN02794.1"/>
    <property type="molecule type" value="Genomic_DNA"/>
</dbReference>
<dbReference type="RefSeq" id="WP_004199856.1">
    <property type="nucleotide sequence ID" value="NC_008836.1"/>
</dbReference>
<dbReference type="SMR" id="A2S7I4"/>
<dbReference type="GeneID" id="93061824"/>
<dbReference type="KEGG" id="bml:BMA10229_A1932"/>
<dbReference type="HOGENOM" id="CLU_158491_1_1_4"/>
<dbReference type="Proteomes" id="UP000002283">
    <property type="component" value="Chromosome I"/>
</dbReference>
<dbReference type="GO" id="GO:0022625">
    <property type="term" value="C:cytosolic large ribosomal subunit"/>
    <property type="evidence" value="ECO:0007669"/>
    <property type="project" value="TreeGrafter"/>
</dbReference>
<dbReference type="GO" id="GO:0003735">
    <property type="term" value="F:structural constituent of ribosome"/>
    <property type="evidence" value="ECO:0007669"/>
    <property type="project" value="InterPro"/>
</dbReference>
<dbReference type="GO" id="GO:0006412">
    <property type="term" value="P:translation"/>
    <property type="evidence" value="ECO:0007669"/>
    <property type="project" value="UniProtKB-UniRule"/>
</dbReference>
<dbReference type="CDD" id="cd00427">
    <property type="entry name" value="Ribosomal_L29_HIP"/>
    <property type="match status" value="1"/>
</dbReference>
<dbReference type="Gene3D" id="6.10.140.1970">
    <property type="match status" value="1"/>
</dbReference>
<dbReference type="HAMAP" id="MF_00374">
    <property type="entry name" value="Ribosomal_uL29"/>
    <property type="match status" value="1"/>
</dbReference>
<dbReference type="InterPro" id="IPR050063">
    <property type="entry name" value="Ribosomal_protein_uL29"/>
</dbReference>
<dbReference type="InterPro" id="IPR001854">
    <property type="entry name" value="Ribosomal_uL29"/>
</dbReference>
<dbReference type="InterPro" id="IPR018254">
    <property type="entry name" value="Ribosomal_uL29_CS"/>
</dbReference>
<dbReference type="InterPro" id="IPR036049">
    <property type="entry name" value="Ribosomal_uL29_sf"/>
</dbReference>
<dbReference type="NCBIfam" id="TIGR00012">
    <property type="entry name" value="L29"/>
    <property type="match status" value="1"/>
</dbReference>
<dbReference type="PANTHER" id="PTHR10916">
    <property type="entry name" value="60S RIBOSOMAL PROTEIN L35/50S RIBOSOMAL PROTEIN L29"/>
    <property type="match status" value="1"/>
</dbReference>
<dbReference type="PANTHER" id="PTHR10916:SF0">
    <property type="entry name" value="LARGE RIBOSOMAL SUBUNIT PROTEIN UL29C"/>
    <property type="match status" value="1"/>
</dbReference>
<dbReference type="Pfam" id="PF00831">
    <property type="entry name" value="Ribosomal_L29"/>
    <property type="match status" value="1"/>
</dbReference>
<dbReference type="SUPFAM" id="SSF46561">
    <property type="entry name" value="Ribosomal protein L29 (L29p)"/>
    <property type="match status" value="1"/>
</dbReference>
<dbReference type="PROSITE" id="PS00579">
    <property type="entry name" value="RIBOSOMAL_L29"/>
    <property type="match status" value="1"/>
</dbReference>
<evidence type="ECO:0000255" key="1">
    <source>
        <dbReference type="HAMAP-Rule" id="MF_00374"/>
    </source>
</evidence>
<evidence type="ECO:0000305" key="2"/>
<feature type="chain" id="PRO_1000007436" description="Large ribosomal subunit protein uL29">
    <location>
        <begin position="1"/>
        <end position="64"/>
    </location>
</feature>